<organism>
    <name type="scientific">Bradyrhizobium sp. (strain BTAi1 / ATCC BAA-1182)</name>
    <dbReference type="NCBI Taxonomy" id="288000"/>
    <lineage>
        <taxon>Bacteria</taxon>
        <taxon>Pseudomonadati</taxon>
        <taxon>Pseudomonadota</taxon>
        <taxon>Alphaproteobacteria</taxon>
        <taxon>Hyphomicrobiales</taxon>
        <taxon>Nitrobacteraceae</taxon>
        <taxon>Bradyrhizobium</taxon>
    </lineage>
</organism>
<evidence type="ECO:0000255" key="1">
    <source>
        <dbReference type="HAMAP-Rule" id="MF_00061"/>
    </source>
</evidence>
<sequence>MLASTVTGAPLQEQGRAKVNLTLRVVGRRVDGYHDLESVVAFADCADQLTLVPGPELTLTTTGPLAAACGETSDNLVLKAARLLAESVPGLKLGAFELEKVLPVAAGIGGGSADAAAALRLLARLNGLSLDDPRLQAVALKTGADVPVCVPSRACTMTGVGENLQPLALPVLPCVMINPRVPVATKDVFQALGLKPGDLLVGVTDVLTAPSWPTAGASIGDWVSALDQVKNDLEPPALKVQPIIGTVLDALRASHGVLLARMSGSGATCFAIYGSEADAKAAGAQISADHPEWWVHAGTLS</sequence>
<dbReference type="EC" id="2.7.1.148" evidence="1"/>
<dbReference type="EMBL" id="CP000494">
    <property type="protein sequence ID" value="ABQ34520.1"/>
    <property type="molecule type" value="Genomic_DNA"/>
</dbReference>
<dbReference type="RefSeq" id="WP_012042548.1">
    <property type="nucleotide sequence ID" value="NC_009485.1"/>
</dbReference>
<dbReference type="SMR" id="A5EEC6"/>
<dbReference type="STRING" id="288000.BBta_2348"/>
<dbReference type="KEGG" id="bbt:BBta_2348"/>
<dbReference type="eggNOG" id="COG1947">
    <property type="taxonomic scope" value="Bacteria"/>
</dbReference>
<dbReference type="HOGENOM" id="CLU_053057_1_0_5"/>
<dbReference type="OrthoDB" id="9809438at2"/>
<dbReference type="UniPathway" id="UPA00056">
    <property type="reaction ID" value="UER00094"/>
</dbReference>
<dbReference type="Proteomes" id="UP000000246">
    <property type="component" value="Chromosome"/>
</dbReference>
<dbReference type="GO" id="GO:0050515">
    <property type="term" value="F:4-(cytidine 5'-diphospho)-2-C-methyl-D-erythritol kinase activity"/>
    <property type="evidence" value="ECO:0007669"/>
    <property type="project" value="UniProtKB-UniRule"/>
</dbReference>
<dbReference type="GO" id="GO:0005524">
    <property type="term" value="F:ATP binding"/>
    <property type="evidence" value="ECO:0007669"/>
    <property type="project" value="UniProtKB-UniRule"/>
</dbReference>
<dbReference type="GO" id="GO:0019288">
    <property type="term" value="P:isopentenyl diphosphate biosynthetic process, methylerythritol 4-phosphate pathway"/>
    <property type="evidence" value="ECO:0007669"/>
    <property type="project" value="UniProtKB-UniRule"/>
</dbReference>
<dbReference type="GO" id="GO:0016114">
    <property type="term" value="P:terpenoid biosynthetic process"/>
    <property type="evidence" value="ECO:0007669"/>
    <property type="project" value="InterPro"/>
</dbReference>
<dbReference type="Gene3D" id="3.30.230.10">
    <property type="match status" value="1"/>
</dbReference>
<dbReference type="Gene3D" id="3.30.70.890">
    <property type="entry name" value="GHMP kinase, C-terminal domain"/>
    <property type="match status" value="1"/>
</dbReference>
<dbReference type="HAMAP" id="MF_00061">
    <property type="entry name" value="IspE"/>
    <property type="match status" value="1"/>
</dbReference>
<dbReference type="InterPro" id="IPR013750">
    <property type="entry name" value="GHMP_kinase_C_dom"/>
</dbReference>
<dbReference type="InterPro" id="IPR036554">
    <property type="entry name" value="GHMP_kinase_C_sf"/>
</dbReference>
<dbReference type="InterPro" id="IPR006204">
    <property type="entry name" value="GHMP_kinase_N_dom"/>
</dbReference>
<dbReference type="InterPro" id="IPR004424">
    <property type="entry name" value="IspE"/>
</dbReference>
<dbReference type="InterPro" id="IPR020568">
    <property type="entry name" value="Ribosomal_Su5_D2-typ_SF"/>
</dbReference>
<dbReference type="InterPro" id="IPR014721">
    <property type="entry name" value="Ribsml_uS5_D2-typ_fold_subgr"/>
</dbReference>
<dbReference type="NCBIfam" id="TIGR00154">
    <property type="entry name" value="ispE"/>
    <property type="match status" value="1"/>
</dbReference>
<dbReference type="NCBIfam" id="NF011202">
    <property type="entry name" value="PRK14608.1"/>
    <property type="match status" value="1"/>
</dbReference>
<dbReference type="PANTHER" id="PTHR43527">
    <property type="entry name" value="4-DIPHOSPHOCYTIDYL-2-C-METHYL-D-ERYTHRITOL KINASE, CHLOROPLASTIC"/>
    <property type="match status" value="1"/>
</dbReference>
<dbReference type="PANTHER" id="PTHR43527:SF2">
    <property type="entry name" value="4-DIPHOSPHOCYTIDYL-2-C-METHYL-D-ERYTHRITOL KINASE, CHLOROPLASTIC"/>
    <property type="match status" value="1"/>
</dbReference>
<dbReference type="Pfam" id="PF08544">
    <property type="entry name" value="GHMP_kinases_C"/>
    <property type="match status" value="1"/>
</dbReference>
<dbReference type="Pfam" id="PF00288">
    <property type="entry name" value="GHMP_kinases_N"/>
    <property type="match status" value="1"/>
</dbReference>
<dbReference type="PIRSF" id="PIRSF010376">
    <property type="entry name" value="IspE"/>
    <property type="match status" value="1"/>
</dbReference>
<dbReference type="SUPFAM" id="SSF55060">
    <property type="entry name" value="GHMP Kinase, C-terminal domain"/>
    <property type="match status" value="1"/>
</dbReference>
<dbReference type="SUPFAM" id="SSF54211">
    <property type="entry name" value="Ribosomal protein S5 domain 2-like"/>
    <property type="match status" value="1"/>
</dbReference>
<accession>A5EEC6</accession>
<feature type="chain" id="PRO_1000007815" description="4-diphosphocytidyl-2-C-methyl-D-erythritol kinase">
    <location>
        <begin position="1"/>
        <end position="301"/>
    </location>
</feature>
<feature type="active site" evidence="1">
    <location>
        <position position="18"/>
    </location>
</feature>
<feature type="active site" evidence="1">
    <location>
        <position position="145"/>
    </location>
</feature>
<feature type="binding site" evidence="1">
    <location>
        <begin position="103"/>
        <end position="113"/>
    </location>
    <ligand>
        <name>ATP</name>
        <dbReference type="ChEBI" id="CHEBI:30616"/>
    </ligand>
</feature>
<keyword id="KW-0067">ATP-binding</keyword>
<keyword id="KW-0414">Isoprene biosynthesis</keyword>
<keyword id="KW-0418">Kinase</keyword>
<keyword id="KW-0547">Nucleotide-binding</keyword>
<keyword id="KW-1185">Reference proteome</keyword>
<keyword id="KW-0808">Transferase</keyword>
<gene>
    <name evidence="1" type="primary">ispE</name>
    <name type="ordered locus">BBta_2348</name>
</gene>
<name>ISPE_BRASB</name>
<comment type="function">
    <text evidence="1">Catalyzes the phosphorylation of the position 2 hydroxy group of 4-diphosphocytidyl-2C-methyl-D-erythritol.</text>
</comment>
<comment type="catalytic activity">
    <reaction evidence="1">
        <text>4-CDP-2-C-methyl-D-erythritol + ATP = 4-CDP-2-C-methyl-D-erythritol 2-phosphate + ADP + H(+)</text>
        <dbReference type="Rhea" id="RHEA:18437"/>
        <dbReference type="ChEBI" id="CHEBI:15378"/>
        <dbReference type="ChEBI" id="CHEBI:30616"/>
        <dbReference type="ChEBI" id="CHEBI:57823"/>
        <dbReference type="ChEBI" id="CHEBI:57919"/>
        <dbReference type="ChEBI" id="CHEBI:456216"/>
        <dbReference type="EC" id="2.7.1.148"/>
    </reaction>
</comment>
<comment type="pathway">
    <text evidence="1">Isoprenoid biosynthesis; isopentenyl diphosphate biosynthesis via DXP pathway; isopentenyl diphosphate from 1-deoxy-D-xylulose 5-phosphate: step 3/6.</text>
</comment>
<comment type="similarity">
    <text evidence="1">Belongs to the GHMP kinase family. IspE subfamily.</text>
</comment>
<proteinExistence type="inferred from homology"/>
<reference key="1">
    <citation type="journal article" date="2007" name="Science">
        <title>Legumes symbioses: absence of nod genes in photosynthetic bradyrhizobia.</title>
        <authorList>
            <person name="Giraud E."/>
            <person name="Moulin L."/>
            <person name="Vallenet D."/>
            <person name="Barbe V."/>
            <person name="Cytryn E."/>
            <person name="Avarre J.-C."/>
            <person name="Jaubert M."/>
            <person name="Simon D."/>
            <person name="Cartieaux F."/>
            <person name="Prin Y."/>
            <person name="Bena G."/>
            <person name="Hannibal L."/>
            <person name="Fardoux J."/>
            <person name="Kojadinovic M."/>
            <person name="Vuillet L."/>
            <person name="Lajus A."/>
            <person name="Cruveiller S."/>
            <person name="Rouy Z."/>
            <person name="Mangenot S."/>
            <person name="Segurens B."/>
            <person name="Dossat C."/>
            <person name="Franck W.L."/>
            <person name="Chang W.-S."/>
            <person name="Saunders E."/>
            <person name="Bruce D."/>
            <person name="Richardson P."/>
            <person name="Normand P."/>
            <person name="Dreyfus B."/>
            <person name="Pignol D."/>
            <person name="Stacey G."/>
            <person name="Emerich D."/>
            <person name="Vermeglio A."/>
            <person name="Medigue C."/>
            <person name="Sadowsky M."/>
        </authorList>
    </citation>
    <scope>NUCLEOTIDE SEQUENCE [LARGE SCALE GENOMIC DNA]</scope>
    <source>
        <strain>BTAi1 / ATCC BAA-1182</strain>
    </source>
</reference>
<protein>
    <recommendedName>
        <fullName evidence="1">4-diphosphocytidyl-2-C-methyl-D-erythritol kinase</fullName>
        <shortName evidence="1">CMK</shortName>
        <ecNumber evidence="1">2.7.1.148</ecNumber>
    </recommendedName>
    <alternativeName>
        <fullName evidence="1">4-(cytidine-5'-diphospho)-2-C-methyl-D-erythritol kinase</fullName>
    </alternativeName>
</protein>